<protein>
    <recommendedName>
        <fullName evidence="1">Hydroxyethylthiazole kinase</fullName>
        <ecNumber evidence="1">2.7.1.50</ecNumber>
    </recommendedName>
    <alternativeName>
        <fullName evidence="1">4-methyl-5-beta-hydroxyethylthiazole kinase</fullName>
        <shortName evidence="1">TH kinase</shortName>
        <shortName evidence="1">Thz kinase</shortName>
    </alternativeName>
</protein>
<feature type="chain" id="PRO_0000383875" description="Hydroxyethylthiazole kinase">
    <location>
        <begin position="1"/>
        <end position="250"/>
    </location>
</feature>
<feature type="binding site" evidence="1">
    <location>
        <position position="39"/>
    </location>
    <ligand>
        <name>substrate</name>
    </ligand>
</feature>
<feature type="binding site" evidence="1">
    <location>
        <position position="114"/>
    </location>
    <ligand>
        <name>ATP</name>
        <dbReference type="ChEBI" id="CHEBI:30616"/>
    </ligand>
</feature>
<feature type="binding site" evidence="1">
    <location>
        <position position="159"/>
    </location>
    <ligand>
        <name>ATP</name>
        <dbReference type="ChEBI" id="CHEBI:30616"/>
    </ligand>
</feature>
<feature type="binding site" evidence="1">
    <location>
        <position position="186"/>
    </location>
    <ligand>
        <name>substrate</name>
    </ligand>
</feature>
<reference key="1">
    <citation type="journal article" date="2006" name="Proc. Natl. Acad. Sci. U.S.A.">
        <title>Comparative genomics of the lactic acid bacteria.</title>
        <authorList>
            <person name="Makarova K.S."/>
            <person name="Slesarev A."/>
            <person name="Wolf Y.I."/>
            <person name="Sorokin A."/>
            <person name="Mirkin B."/>
            <person name="Koonin E.V."/>
            <person name="Pavlov A."/>
            <person name="Pavlova N."/>
            <person name="Karamychev V."/>
            <person name="Polouchine N."/>
            <person name="Shakhova V."/>
            <person name="Grigoriev I."/>
            <person name="Lou Y."/>
            <person name="Rohksar D."/>
            <person name="Lucas S."/>
            <person name="Huang K."/>
            <person name="Goodstein D.M."/>
            <person name="Hawkins T."/>
            <person name="Plengvidhya V."/>
            <person name="Welker D."/>
            <person name="Hughes J."/>
            <person name="Goh Y."/>
            <person name="Benson A."/>
            <person name="Baldwin K."/>
            <person name="Lee J.-H."/>
            <person name="Diaz-Muniz I."/>
            <person name="Dosti B."/>
            <person name="Smeianov V."/>
            <person name="Wechter W."/>
            <person name="Barabote R."/>
            <person name="Lorca G."/>
            <person name="Altermann E."/>
            <person name="Barrangou R."/>
            <person name="Ganesan B."/>
            <person name="Xie Y."/>
            <person name="Rawsthorne H."/>
            <person name="Tamir D."/>
            <person name="Parker C."/>
            <person name="Breidt F."/>
            <person name="Broadbent J.R."/>
            <person name="Hutkins R."/>
            <person name="O'Sullivan D."/>
            <person name="Steele J."/>
            <person name="Unlu G."/>
            <person name="Saier M.H. Jr."/>
            <person name="Klaenhammer T."/>
            <person name="Richardson P."/>
            <person name="Kozyavkin S."/>
            <person name="Weimer B.C."/>
            <person name="Mills D.A."/>
        </authorList>
    </citation>
    <scope>NUCLEOTIDE SEQUENCE [LARGE SCALE GENOMIC DNA]</scope>
    <source>
        <strain>SK11</strain>
    </source>
</reference>
<evidence type="ECO:0000255" key="1">
    <source>
        <dbReference type="HAMAP-Rule" id="MF_00228"/>
    </source>
</evidence>
<gene>
    <name evidence="1" type="primary">thiM</name>
    <name type="ordered locus">LACR_1377</name>
</gene>
<proteinExistence type="inferred from homology"/>
<sequence length="250" mass="27106">MSILGKIQRTQPLILNLANFLTPQRVADVISFIGASPLMTSEIAELESLVEISDAVVVNIGTISESTYPLFLEACRLANQKAKPLILDPVAVNVPFRASIVKRLSQEVKFNIIRGNSAEIAWFADKKSLNKGIDALESNIDNEHARLAAKKTGAVIIETGKVDIISKGHEEMYVDTDSPLFKINVGCGDMLTAVVGTFAAVSDDLFTAAYEATKFFGEAGMIATKQVQNLPGNFVNSLLDTLYQATQEIK</sequence>
<name>THIM_LACLS</name>
<keyword id="KW-0067">ATP-binding</keyword>
<keyword id="KW-0418">Kinase</keyword>
<keyword id="KW-0460">Magnesium</keyword>
<keyword id="KW-0479">Metal-binding</keyword>
<keyword id="KW-0547">Nucleotide-binding</keyword>
<keyword id="KW-0784">Thiamine biosynthesis</keyword>
<keyword id="KW-0808">Transferase</keyword>
<accession>Q02YS4</accession>
<organism>
    <name type="scientific">Lactococcus lactis subsp. cremoris (strain SK11)</name>
    <dbReference type="NCBI Taxonomy" id="272622"/>
    <lineage>
        <taxon>Bacteria</taxon>
        <taxon>Bacillati</taxon>
        <taxon>Bacillota</taxon>
        <taxon>Bacilli</taxon>
        <taxon>Lactobacillales</taxon>
        <taxon>Streptococcaceae</taxon>
        <taxon>Lactococcus</taxon>
        <taxon>Lactococcus cremoris subsp. cremoris</taxon>
    </lineage>
</organism>
<dbReference type="EC" id="2.7.1.50" evidence="1"/>
<dbReference type="EMBL" id="CP000425">
    <property type="protein sequence ID" value="ABJ72898.1"/>
    <property type="molecule type" value="Genomic_DNA"/>
</dbReference>
<dbReference type="RefSeq" id="WP_011676189.1">
    <property type="nucleotide sequence ID" value="NC_008527.1"/>
</dbReference>
<dbReference type="SMR" id="Q02YS4"/>
<dbReference type="KEGG" id="llc:LACR_1377"/>
<dbReference type="HOGENOM" id="CLU_019943_0_0_9"/>
<dbReference type="UniPathway" id="UPA00060">
    <property type="reaction ID" value="UER00139"/>
</dbReference>
<dbReference type="Proteomes" id="UP000000240">
    <property type="component" value="Chromosome"/>
</dbReference>
<dbReference type="GO" id="GO:0005524">
    <property type="term" value="F:ATP binding"/>
    <property type="evidence" value="ECO:0007669"/>
    <property type="project" value="UniProtKB-UniRule"/>
</dbReference>
<dbReference type="GO" id="GO:0004417">
    <property type="term" value="F:hydroxyethylthiazole kinase activity"/>
    <property type="evidence" value="ECO:0007669"/>
    <property type="project" value="UniProtKB-UniRule"/>
</dbReference>
<dbReference type="GO" id="GO:0000287">
    <property type="term" value="F:magnesium ion binding"/>
    <property type="evidence" value="ECO:0007669"/>
    <property type="project" value="UniProtKB-UniRule"/>
</dbReference>
<dbReference type="GO" id="GO:0009228">
    <property type="term" value="P:thiamine biosynthetic process"/>
    <property type="evidence" value="ECO:0007669"/>
    <property type="project" value="UniProtKB-KW"/>
</dbReference>
<dbReference type="GO" id="GO:0009229">
    <property type="term" value="P:thiamine diphosphate biosynthetic process"/>
    <property type="evidence" value="ECO:0007669"/>
    <property type="project" value="UniProtKB-UniRule"/>
</dbReference>
<dbReference type="CDD" id="cd01170">
    <property type="entry name" value="THZ_kinase"/>
    <property type="match status" value="1"/>
</dbReference>
<dbReference type="Gene3D" id="3.40.1190.20">
    <property type="match status" value="1"/>
</dbReference>
<dbReference type="HAMAP" id="MF_00228">
    <property type="entry name" value="Thz_kinase"/>
    <property type="match status" value="1"/>
</dbReference>
<dbReference type="InterPro" id="IPR000417">
    <property type="entry name" value="Hyethyz_kinase"/>
</dbReference>
<dbReference type="InterPro" id="IPR029056">
    <property type="entry name" value="Ribokinase-like"/>
</dbReference>
<dbReference type="NCBIfam" id="NF006830">
    <property type="entry name" value="PRK09355.1"/>
    <property type="match status" value="1"/>
</dbReference>
<dbReference type="Pfam" id="PF02110">
    <property type="entry name" value="HK"/>
    <property type="match status" value="1"/>
</dbReference>
<dbReference type="PIRSF" id="PIRSF000513">
    <property type="entry name" value="Thz_kinase"/>
    <property type="match status" value="1"/>
</dbReference>
<dbReference type="PRINTS" id="PR01099">
    <property type="entry name" value="HYETHTZKNASE"/>
</dbReference>
<dbReference type="SUPFAM" id="SSF53613">
    <property type="entry name" value="Ribokinase-like"/>
    <property type="match status" value="1"/>
</dbReference>
<comment type="function">
    <text evidence="1">Catalyzes the phosphorylation of the hydroxyl group of 4-methyl-5-beta-hydroxyethylthiazole (THZ).</text>
</comment>
<comment type="catalytic activity">
    <reaction evidence="1">
        <text>5-(2-hydroxyethyl)-4-methylthiazole + ATP = 4-methyl-5-(2-phosphooxyethyl)-thiazole + ADP + H(+)</text>
        <dbReference type="Rhea" id="RHEA:24212"/>
        <dbReference type="ChEBI" id="CHEBI:15378"/>
        <dbReference type="ChEBI" id="CHEBI:17957"/>
        <dbReference type="ChEBI" id="CHEBI:30616"/>
        <dbReference type="ChEBI" id="CHEBI:58296"/>
        <dbReference type="ChEBI" id="CHEBI:456216"/>
        <dbReference type="EC" id="2.7.1.50"/>
    </reaction>
</comment>
<comment type="cofactor">
    <cofactor evidence="1">
        <name>Mg(2+)</name>
        <dbReference type="ChEBI" id="CHEBI:18420"/>
    </cofactor>
</comment>
<comment type="pathway">
    <text evidence="1">Cofactor biosynthesis; thiamine diphosphate biosynthesis; 4-methyl-5-(2-phosphoethyl)-thiazole from 5-(2-hydroxyethyl)-4-methylthiazole: step 1/1.</text>
</comment>
<comment type="similarity">
    <text evidence="1">Belongs to the Thz kinase family.</text>
</comment>